<gene>
    <name type="primary">MT-CYB</name>
    <name type="synonym">COB</name>
    <name type="synonym">CYTB</name>
    <name type="synonym">MTCYB</name>
</gene>
<organism>
    <name type="scientific">Pelea capreolus</name>
    <name type="common">Gray rhebok</name>
    <dbReference type="NCBI Taxonomy" id="59552"/>
    <lineage>
        <taxon>Eukaryota</taxon>
        <taxon>Metazoa</taxon>
        <taxon>Chordata</taxon>
        <taxon>Craniata</taxon>
        <taxon>Vertebrata</taxon>
        <taxon>Euteleostomi</taxon>
        <taxon>Mammalia</taxon>
        <taxon>Eutheria</taxon>
        <taxon>Laurasiatheria</taxon>
        <taxon>Artiodactyla</taxon>
        <taxon>Ruminantia</taxon>
        <taxon>Pecora</taxon>
        <taxon>Bovidae</taxon>
        <taxon>Peleinae</taxon>
        <taxon>Pelea</taxon>
    </lineage>
</organism>
<feature type="chain" id="PRO_0000061364" description="Cytochrome b">
    <location>
        <begin position="1"/>
        <end position="379"/>
    </location>
</feature>
<feature type="transmembrane region" description="Helical" evidence="2">
    <location>
        <begin position="33"/>
        <end position="53"/>
    </location>
</feature>
<feature type="transmembrane region" description="Helical" evidence="2">
    <location>
        <begin position="77"/>
        <end position="98"/>
    </location>
</feature>
<feature type="transmembrane region" description="Helical" evidence="2">
    <location>
        <begin position="113"/>
        <end position="133"/>
    </location>
</feature>
<feature type="transmembrane region" description="Helical" evidence="2">
    <location>
        <begin position="178"/>
        <end position="198"/>
    </location>
</feature>
<feature type="transmembrane region" description="Helical" evidence="2">
    <location>
        <begin position="226"/>
        <end position="246"/>
    </location>
</feature>
<feature type="transmembrane region" description="Helical" evidence="2">
    <location>
        <begin position="288"/>
        <end position="308"/>
    </location>
</feature>
<feature type="transmembrane region" description="Helical" evidence="2">
    <location>
        <begin position="320"/>
        <end position="340"/>
    </location>
</feature>
<feature type="transmembrane region" description="Helical" evidence="2">
    <location>
        <begin position="347"/>
        <end position="367"/>
    </location>
</feature>
<feature type="binding site" description="axial binding residue" evidence="2">
    <location>
        <position position="83"/>
    </location>
    <ligand>
        <name>heme b</name>
        <dbReference type="ChEBI" id="CHEBI:60344"/>
        <label>b562</label>
    </ligand>
    <ligandPart>
        <name>Fe</name>
        <dbReference type="ChEBI" id="CHEBI:18248"/>
    </ligandPart>
</feature>
<feature type="binding site" description="axial binding residue" evidence="2">
    <location>
        <position position="97"/>
    </location>
    <ligand>
        <name>heme b</name>
        <dbReference type="ChEBI" id="CHEBI:60344"/>
        <label>b566</label>
    </ligand>
    <ligandPart>
        <name>Fe</name>
        <dbReference type="ChEBI" id="CHEBI:18248"/>
    </ligandPart>
</feature>
<feature type="binding site" description="axial binding residue" evidence="2">
    <location>
        <position position="182"/>
    </location>
    <ligand>
        <name>heme b</name>
        <dbReference type="ChEBI" id="CHEBI:60344"/>
        <label>b562</label>
    </ligand>
    <ligandPart>
        <name>Fe</name>
        <dbReference type="ChEBI" id="CHEBI:18248"/>
    </ligandPart>
</feature>
<feature type="binding site" description="axial binding residue" evidence="2">
    <location>
        <position position="196"/>
    </location>
    <ligand>
        <name>heme b</name>
        <dbReference type="ChEBI" id="CHEBI:60344"/>
        <label>b566</label>
    </ligand>
    <ligandPart>
        <name>Fe</name>
        <dbReference type="ChEBI" id="CHEBI:18248"/>
    </ligandPart>
</feature>
<feature type="binding site" evidence="2">
    <location>
        <position position="201"/>
    </location>
    <ligand>
        <name>a ubiquinone</name>
        <dbReference type="ChEBI" id="CHEBI:16389"/>
    </ligand>
</feature>
<reference key="1">
    <citation type="journal article" date="1999" name="Mol. Phylogenet. Evol.">
        <title>Cytochrome b phylogeny of the family bovidae: resolution within the alcelaphini, antilopini, neotragini, and tragelaphini.</title>
        <authorList>
            <person name="Matthee C.A."/>
            <person name="Robinson T.J."/>
        </authorList>
    </citation>
    <scope>NUCLEOTIDE SEQUENCE [GENOMIC DNA]</scope>
</reference>
<geneLocation type="mitochondrion"/>
<accession>O47714</accession>
<sequence length="379" mass="42787">MTNIRKTHPLMKIVNNAFIDLPTPSNISSWWNFGSLLGICLVLQILTGLFLAMHYTSDTMTAFSSVTHICRDVNYGWIIRYMHANGASMFFICLFMHVGRGLYYGSYIFLKTWNIGVILLFATMATAFMGYVLPWGQMSFWGATVITNLLSAIPYIGTNLVEWIWGGFSVDKATLTRFFAFHFILPFIIAALTMVHLLFLHETGSNNPTGIPSDMDKIPFHPYYTIKDILGALLLILILTLLVLFTPDLLGDPDNYTPANPLNTPPHIKPEWYFLFAYAILRSIPNKLGGVLALVPSILILILMPLNHTSKQRSMMFQPISQCLFWILVADLPMLTWIGGQPVEHPYIIIGQLASIMYFLLILVLMPTASTIENNLPKR</sequence>
<name>CYB_PELCP</name>
<evidence type="ECO:0000250" key="1"/>
<evidence type="ECO:0000250" key="2">
    <source>
        <dbReference type="UniProtKB" id="P00157"/>
    </source>
</evidence>
<evidence type="ECO:0000255" key="3">
    <source>
        <dbReference type="PROSITE-ProRule" id="PRU00967"/>
    </source>
</evidence>
<evidence type="ECO:0000255" key="4">
    <source>
        <dbReference type="PROSITE-ProRule" id="PRU00968"/>
    </source>
</evidence>
<keyword id="KW-0249">Electron transport</keyword>
<keyword id="KW-0349">Heme</keyword>
<keyword id="KW-0408">Iron</keyword>
<keyword id="KW-0472">Membrane</keyword>
<keyword id="KW-0479">Metal-binding</keyword>
<keyword id="KW-0496">Mitochondrion</keyword>
<keyword id="KW-0999">Mitochondrion inner membrane</keyword>
<keyword id="KW-0679">Respiratory chain</keyword>
<keyword id="KW-0812">Transmembrane</keyword>
<keyword id="KW-1133">Transmembrane helix</keyword>
<keyword id="KW-0813">Transport</keyword>
<keyword id="KW-0830">Ubiquinone</keyword>
<proteinExistence type="inferred from homology"/>
<protein>
    <recommendedName>
        <fullName>Cytochrome b</fullName>
    </recommendedName>
    <alternativeName>
        <fullName>Complex III subunit 3</fullName>
    </alternativeName>
    <alternativeName>
        <fullName>Complex III subunit III</fullName>
    </alternativeName>
    <alternativeName>
        <fullName>Cytochrome b-c1 complex subunit 3</fullName>
    </alternativeName>
    <alternativeName>
        <fullName>Ubiquinol-cytochrome-c reductase complex cytochrome b subunit</fullName>
    </alternativeName>
</protein>
<comment type="function">
    <text evidence="2">Component of the ubiquinol-cytochrome c reductase complex (complex III or cytochrome b-c1 complex) that is part of the mitochondrial respiratory chain. The b-c1 complex mediates electron transfer from ubiquinol to cytochrome c. Contributes to the generation of a proton gradient across the mitochondrial membrane that is then used for ATP synthesis.</text>
</comment>
<comment type="cofactor">
    <cofactor evidence="2">
        <name>heme b</name>
        <dbReference type="ChEBI" id="CHEBI:60344"/>
    </cofactor>
    <text evidence="2">Binds 2 heme b groups non-covalently.</text>
</comment>
<comment type="subunit">
    <text evidence="2">The cytochrome bc1 complex contains 11 subunits: 3 respiratory subunits (MT-CYB, CYC1 and UQCRFS1), 2 core proteins (UQCRC1 and UQCRC2) and 6 low-molecular weight proteins (UQCRH/QCR6, UQCRB/QCR7, UQCRQ/QCR8, UQCR10/QCR9, UQCR11/QCR10 and a cleavage product of UQCRFS1). This cytochrome bc1 complex then forms a dimer.</text>
</comment>
<comment type="subcellular location">
    <subcellularLocation>
        <location evidence="2">Mitochondrion inner membrane</location>
        <topology evidence="2">Multi-pass membrane protein</topology>
    </subcellularLocation>
</comment>
<comment type="miscellaneous">
    <text evidence="1">Heme 1 (or BL or b562) is low-potential and absorbs at about 562 nm, and heme 2 (or BH or b566) is high-potential and absorbs at about 566 nm.</text>
</comment>
<comment type="similarity">
    <text evidence="3 4">Belongs to the cytochrome b family.</text>
</comment>
<comment type="caution">
    <text evidence="2">The full-length protein contains only eight transmembrane helices, not nine as predicted by bioinformatics tools.</text>
</comment>
<dbReference type="EMBL" id="AF022055">
    <property type="protein sequence ID" value="AAD13489.1"/>
    <property type="molecule type" value="Genomic_DNA"/>
</dbReference>
<dbReference type="SMR" id="O47714"/>
<dbReference type="GO" id="GO:0005743">
    <property type="term" value="C:mitochondrial inner membrane"/>
    <property type="evidence" value="ECO:0007669"/>
    <property type="project" value="UniProtKB-SubCell"/>
</dbReference>
<dbReference type="GO" id="GO:0045275">
    <property type="term" value="C:respiratory chain complex III"/>
    <property type="evidence" value="ECO:0007669"/>
    <property type="project" value="InterPro"/>
</dbReference>
<dbReference type="GO" id="GO:0046872">
    <property type="term" value="F:metal ion binding"/>
    <property type="evidence" value="ECO:0007669"/>
    <property type="project" value="UniProtKB-KW"/>
</dbReference>
<dbReference type="GO" id="GO:0008121">
    <property type="term" value="F:ubiquinol-cytochrome-c reductase activity"/>
    <property type="evidence" value="ECO:0007669"/>
    <property type="project" value="InterPro"/>
</dbReference>
<dbReference type="GO" id="GO:0006122">
    <property type="term" value="P:mitochondrial electron transport, ubiquinol to cytochrome c"/>
    <property type="evidence" value="ECO:0007669"/>
    <property type="project" value="TreeGrafter"/>
</dbReference>
<dbReference type="CDD" id="cd00290">
    <property type="entry name" value="cytochrome_b_C"/>
    <property type="match status" value="1"/>
</dbReference>
<dbReference type="CDD" id="cd00284">
    <property type="entry name" value="Cytochrome_b_N"/>
    <property type="match status" value="1"/>
</dbReference>
<dbReference type="FunFam" id="1.20.810.10:FF:000002">
    <property type="entry name" value="Cytochrome b"/>
    <property type="match status" value="1"/>
</dbReference>
<dbReference type="Gene3D" id="1.20.810.10">
    <property type="entry name" value="Cytochrome Bc1 Complex, Chain C"/>
    <property type="match status" value="1"/>
</dbReference>
<dbReference type="InterPro" id="IPR005798">
    <property type="entry name" value="Cyt_b/b6_C"/>
</dbReference>
<dbReference type="InterPro" id="IPR036150">
    <property type="entry name" value="Cyt_b/b6_C_sf"/>
</dbReference>
<dbReference type="InterPro" id="IPR005797">
    <property type="entry name" value="Cyt_b/b6_N"/>
</dbReference>
<dbReference type="InterPro" id="IPR027387">
    <property type="entry name" value="Cytb/b6-like_sf"/>
</dbReference>
<dbReference type="InterPro" id="IPR030689">
    <property type="entry name" value="Cytochrome_b"/>
</dbReference>
<dbReference type="InterPro" id="IPR048260">
    <property type="entry name" value="Cytochrome_b_C_euk/bac"/>
</dbReference>
<dbReference type="InterPro" id="IPR048259">
    <property type="entry name" value="Cytochrome_b_N_euk/bac"/>
</dbReference>
<dbReference type="InterPro" id="IPR016174">
    <property type="entry name" value="Di-haem_cyt_TM"/>
</dbReference>
<dbReference type="PANTHER" id="PTHR19271">
    <property type="entry name" value="CYTOCHROME B"/>
    <property type="match status" value="1"/>
</dbReference>
<dbReference type="PANTHER" id="PTHR19271:SF16">
    <property type="entry name" value="CYTOCHROME B"/>
    <property type="match status" value="1"/>
</dbReference>
<dbReference type="Pfam" id="PF00032">
    <property type="entry name" value="Cytochrom_B_C"/>
    <property type="match status" value="1"/>
</dbReference>
<dbReference type="Pfam" id="PF00033">
    <property type="entry name" value="Cytochrome_B"/>
    <property type="match status" value="1"/>
</dbReference>
<dbReference type="PIRSF" id="PIRSF038885">
    <property type="entry name" value="COB"/>
    <property type="match status" value="1"/>
</dbReference>
<dbReference type="SUPFAM" id="SSF81648">
    <property type="entry name" value="a domain/subunit of cytochrome bc1 complex (Ubiquinol-cytochrome c reductase)"/>
    <property type="match status" value="1"/>
</dbReference>
<dbReference type="SUPFAM" id="SSF81342">
    <property type="entry name" value="Transmembrane di-heme cytochromes"/>
    <property type="match status" value="1"/>
</dbReference>
<dbReference type="PROSITE" id="PS51003">
    <property type="entry name" value="CYTB_CTER"/>
    <property type="match status" value="1"/>
</dbReference>
<dbReference type="PROSITE" id="PS51002">
    <property type="entry name" value="CYTB_NTER"/>
    <property type="match status" value="1"/>
</dbReference>